<accession>A7ZAQ7</accession>
<proteinExistence type="inferred from homology"/>
<comment type="function">
    <text evidence="1">Binds to the 23S rRNA.</text>
</comment>
<comment type="similarity">
    <text evidence="1">Belongs to the bacterial ribosomal protein bL9 family.</text>
</comment>
<evidence type="ECO:0000255" key="1">
    <source>
        <dbReference type="HAMAP-Rule" id="MF_00503"/>
    </source>
</evidence>
<evidence type="ECO:0000305" key="2"/>
<reference key="1">
    <citation type="journal article" date="2007" name="Nat. Biotechnol.">
        <title>Comparative analysis of the complete genome sequence of the plant growth-promoting bacterium Bacillus amyloliquefaciens FZB42.</title>
        <authorList>
            <person name="Chen X.H."/>
            <person name="Koumoutsi A."/>
            <person name="Scholz R."/>
            <person name="Eisenreich A."/>
            <person name="Schneider K."/>
            <person name="Heinemeyer I."/>
            <person name="Morgenstern B."/>
            <person name="Voss B."/>
            <person name="Hess W.R."/>
            <person name="Reva O."/>
            <person name="Junge H."/>
            <person name="Voigt B."/>
            <person name="Jungblut P.R."/>
            <person name="Vater J."/>
            <person name="Suessmuth R."/>
            <person name="Liesegang H."/>
            <person name="Strittmatter A."/>
            <person name="Gottschalk G."/>
            <person name="Borriss R."/>
        </authorList>
    </citation>
    <scope>NUCLEOTIDE SEQUENCE [LARGE SCALE GENOMIC DNA]</scope>
    <source>
        <strain>DSM 23117 / BGSC 10A6 / LMG 26770 / FZB42</strain>
    </source>
</reference>
<keyword id="KW-0687">Ribonucleoprotein</keyword>
<keyword id="KW-0689">Ribosomal protein</keyword>
<keyword id="KW-0694">RNA-binding</keyword>
<keyword id="KW-0699">rRNA-binding</keyword>
<protein>
    <recommendedName>
        <fullName evidence="1">Large ribosomal subunit protein bL9</fullName>
    </recommendedName>
    <alternativeName>
        <fullName evidence="2">50S ribosomal protein L9</fullName>
    </alternativeName>
</protein>
<gene>
    <name evidence="1" type="primary">rplI</name>
    <name type="ordered locus">RBAM_037580</name>
</gene>
<dbReference type="EMBL" id="CP000560">
    <property type="protein sequence ID" value="ABS76083.1"/>
    <property type="molecule type" value="Genomic_DNA"/>
</dbReference>
<dbReference type="RefSeq" id="WP_004393063.1">
    <property type="nucleotide sequence ID" value="NC_009725.2"/>
</dbReference>
<dbReference type="SMR" id="A7ZAQ7"/>
<dbReference type="GeneID" id="93082893"/>
<dbReference type="KEGG" id="bay:RBAM_037580"/>
<dbReference type="HOGENOM" id="CLU_078938_3_2_9"/>
<dbReference type="Proteomes" id="UP000001120">
    <property type="component" value="Chromosome"/>
</dbReference>
<dbReference type="GO" id="GO:1990904">
    <property type="term" value="C:ribonucleoprotein complex"/>
    <property type="evidence" value="ECO:0007669"/>
    <property type="project" value="UniProtKB-KW"/>
</dbReference>
<dbReference type="GO" id="GO:0005840">
    <property type="term" value="C:ribosome"/>
    <property type="evidence" value="ECO:0007669"/>
    <property type="project" value="UniProtKB-KW"/>
</dbReference>
<dbReference type="GO" id="GO:0019843">
    <property type="term" value="F:rRNA binding"/>
    <property type="evidence" value="ECO:0007669"/>
    <property type="project" value="UniProtKB-UniRule"/>
</dbReference>
<dbReference type="GO" id="GO:0003735">
    <property type="term" value="F:structural constituent of ribosome"/>
    <property type="evidence" value="ECO:0007669"/>
    <property type="project" value="InterPro"/>
</dbReference>
<dbReference type="GO" id="GO:0006412">
    <property type="term" value="P:translation"/>
    <property type="evidence" value="ECO:0007669"/>
    <property type="project" value="UniProtKB-UniRule"/>
</dbReference>
<dbReference type="FunFam" id="3.10.430.100:FF:000002">
    <property type="entry name" value="50S ribosomal protein L9"/>
    <property type="match status" value="1"/>
</dbReference>
<dbReference type="FunFam" id="3.40.5.10:FF:000002">
    <property type="entry name" value="50S ribosomal protein L9"/>
    <property type="match status" value="1"/>
</dbReference>
<dbReference type="Gene3D" id="3.10.430.100">
    <property type="entry name" value="Ribosomal protein L9, C-terminal domain"/>
    <property type="match status" value="1"/>
</dbReference>
<dbReference type="Gene3D" id="3.40.5.10">
    <property type="entry name" value="Ribosomal protein L9, N-terminal domain"/>
    <property type="match status" value="1"/>
</dbReference>
<dbReference type="HAMAP" id="MF_00503">
    <property type="entry name" value="Ribosomal_bL9"/>
    <property type="match status" value="1"/>
</dbReference>
<dbReference type="InterPro" id="IPR000244">
    <property type="entry name" value="Ribosomal_bL9"/>
</dbReference>
<dbReference type="InterPro" id="IPR009027">
    <property type="entry name" value="Ribosomal_bL9/RNase_H1_N"/>
</dbReference>
<dbReference type="InterPro" id="IPR020594">
    <property type="entry name" value="Ribosomal_bL9_bac/chp"/>
</dbReference>
<dbReference type="InterPro" id="IPR020069">
    <property type="entry name" value="Ribosomal_bL9_C"/>
</dbReference>
<dbReference type="InterPro" id="IPR036791">
    <property type="entry name" value="Ribosomal_bL9_C_sf"/>
</dbReference>
<dbReference type="InterPro" id="IPR020070">
    <property type="entry name" value="Ribosomal_bL9_N"/>
</dbReference>
<dbReference type="InterPro" id="IPR036935">
    <property type="entry name" value="Ribosomal_bL9_N_sf"/>
</dbReference>
<dbReference type="NCBIfam" id="TIGR00158">
    <property type="entry name" value="L9"/>
    <property type="match status" value="1"/>
</dbReference>
<dbReference type="PANTHER" id="PTHR21368">
    <property type="entry name" value="50S RIBOSOMAL PROTEIN L9"/>
    <property type="match status" value="1"/>
</dbReference>
<dbReference type="Pfam" id="PF03948">
    <property type="entry name" value="Ribosomal_L9_C"/>
    <property type="match status" value="1"/>
</dbReference>
<dbReference type="Pfam" id="PF01281">
    <property type="entry name" value="Ribosomal_L9_N"/>
    <property type="match status" value="1"/>
</dbReference>
<dbReference type="SUPFAM" id="SSF55658">
    <property type="entry name" value="L9 N-domain-like"/>
    <property type="match status" value="1"/>
</dbReference>
<dbReference type="SUPFAM" id="SSF55653">
    <property type="entry name" value="Ribosomal protein L9 C-domain"/>
    <property type="match status" value="1"/>
</dbReference>
<dbReference type="PROSITE" id="PS00651">
    <property type="entry name" value="RIBOSOMAL_L9"/>
    <property type="match status" value="1"/>
</dbReference>
<name>RL9_BACVZ</name>
<sequence>MKVIFLQDVKGKGKKGEMKNVADGYAHNFLIKKGLAVEANATNISALKGQKEKEKKEAIAELERAKDLKETLEQLTVELSAKSGEGGRLFGSVTSKQIAEALQKTHKIKVDKRKLELQDGIRTLGYTNVPVKLHPEVQAVLKVHVKEEA</sequence>
<organism>
    <name type="scientific">Bacillus velezensis (strain DSM 23117 / BGSC 10A6 / LMG 26770 / FZB42)</name>
    <name type="common">Bacillus amyloliquefaciens subsp. plantarum</name>
    <dbReference type="NCBI Taxonomy" id="326423"/>
    <lineage>
        <taxon>Bacteria</taxon>
        <taxon>Bacillati</taxon>
        <taxon>Bacillota</taxon>
        <taxon>Bacilli</taxon>
        <taxon>Bacillales</taxon>
        <taxon>Bacillaceae</taxon>
        <taxon>Bacillus</taxon>
        <taxon>Bacillus amyloliquefaciens group</taxon>
    </lineage>
</organism>
<feature type="chain" id="PRO_1000014739" description="Large ribosomal subunit protein bL9">
    <location>
        <begin position="1"/>
        <end position="149"/>
    </location>
</feature>